<organism>
    <name type="scientific">Candida maltosa</name>
    <name type="common">Yeast</name>
    <dbReference type="NCBI Taxonomy" id="5479"/>
    <lineage>
        <taxon>Eukaryota</taxon>
        <taxon>Fungi</taxon>
        <taxon>Dikarya</taxon>
        <taxon>Ascomycota</taxon>
        <taxon>Saccharomycotina</taxon>
        <taxon>Pichiomycetes</taxon>
        <taxon>Debaryomycetaceae</taxon>
        <taxon>Candida/Lodderomyces clade</taxon>
        <taxon>Candida</taxon>
    </lineage>
</organism>
<keyword id="KW-0534">Nitrate assimilation</keyword>
<comment type="function">
    <text evidence="1">Plays an important role in the cellular response to the nitrogen source. URE2 gene plays a major part in the repression of GLN1 and GDH2 genes by glutamine, and is required for the inactivation of glutamine synthetase. URE2 gene product may catalytically inactivate GLN3 in response to an increase in the intracellular concentration of glutamine (By similarity).</text>
</comment>
<comment type="subunit">
    <text evidence="1">Homodimer.</text>
</comment>
<comment type="similarity">
    <text evidence="3">Belongs to the GST superfamily.</text>
</comment>
<sequence>MNMSDQRIPQNTGDNSNNSNSNNNNNNNNNTHTISNLSAGLKSVSLTDQQQNEVNLNLLQQQLHRESSNQQQQSRITQFFQNQPAEGYTLFSHRSAPNGFKVAIILSELNLPFNTIFLDFNNGEQRAPEFVTINPNARVPALIDHFNENTSIWESGAIILYLVSKYLKENGECSLWSDNLIEQSQISSWLFFQTSGHAPMIGQALHFRYFHSCPVPSAVERYTDEVRRVYGVVEMALAERREALIMDLDVENAAAYSAGTTPLSQSRYFDYPVWLVGDRATVADLSFVPWNNVVDRIGINLKVEFPEVYKWTKYMMRRPAVIRALRGD</sequence>
<protein>
    <recommendedName>
        <fullName>Protein URE2</fullName>
    </recommendedName>
</protein>
<dbReference type="EMBL" id="AF525172">
    <property type="protein sequence ID" value="AAM91945.1"/>
    <property type="molecule type" value="Genomic_DNA"/>
</dbReference>
<dbReference type="SMR" id="Q8NJR0"/>
<dbReference type="OMA" id="YEPHRID"/>
<dbReference type="GO" id="GO:0003714">
    <property type="term" value="F:transcription corepressor activity"/>
    <property type="evidence" value="ECO:0007669"/>
    <property type="project" value="InterPro"/>
</dbReference>
<dbReference type="GO" id="GO:0042128">
    <property type="term" value="P:nitrate assimilation"/>
    <property type="evidence" value="ECO:0007669"/>
    <property type="project" value="UniProtKB-KW"/>
</dbReference>
<dbReference type="GO" id="GO:0006808">
    <property type="term" value="P:regulation of nitrogen utilization"/>
    <property type="evidence" value="ECO:0007669"/>
    <property type="project" value="InterPro"/>
</dbReference>
<dbReference type="CDD" id="cd10293">
    <property type="entry name" value="GST_C_Ure2p"/>
    <property type="match status" value="1"/>
</dbReference>
<dbReference type="CDD" id="cd03048">
    <property type="entry name" value="GST_N_Ure2p_like"/>
    <property type="match status" value="1"/>
</dbReference>
<dbReference type="FunFam" id="3.40.30.10:FF:000222">
    <property type="entry name" value="Protein URE2"/>
    <property type="match status" value="1"/>
</dbReference>
<dbReference type="FunFam" id="1.20.1050.10:FF:000034">
    <property type="entry name" value="Transcriptional regulator URE2"/>
    <property type="match status" value="1"/>
</dbReference>
<dbReference type="Gene3D" id="1.20.1050.10">
    <property type="match status" value="1"/>
</dbReference>
<dbReference type="Gene3D" id="3.40.30.10">
    <property type="entry name" value="Glutaredoxin"/>
    <property type="match status" value="1"/>
</dbReference>
<dbReference type="InterPro" id="IPR010987">
    <property type="entry name" value="Glutathione-S-Trfase_C-like"/>
</dbReference>
<dbReference type="InterPro" id="IPR036282">
    <property type="entry name" value="Glutathione-S-Trfase_C_sf"/>
</dbReference>
<dbReference type="InterPro" id="IPR040079">
    <property type="entry name" value="Glutathione_S-Trfase"/>
</dbReference>
<dbReference type="InterPro" id="IPR004045">
    <property type="entry name" value="Glutathione_S-Trfase_N"/>
</dbReference>
<dbReference type="InterPro" id="IPR004046">
    <property type="entry name" value="GST_C"/>
</dbReference>
<dbReference type="InterPro" id="IPR036249">
    <property type="entry name" value="Thioredoxin-like_sf"/>
</dbReference>
<dbReference type="InterPro" id="IPR017298">
    <property type="entry name" value="Ure2"/>
</dbReference>
<dbReference type="PANTHER" id="PTHR44051">
    <property type="entry name" value="GLUTATHIONE S-TRANSFERASE-RELATED"/>
    <property type="match status" value="1"/>
</dbReference>
<dbReference type="PANTHER" id="PTHR44051:SF3">
    <property type="entry name" value="TRANSCRIPTIONAL REGULATOR URE2"/>
    <property type="match status" value="1"/>
</dbReference>
<dbReference type="Pfam" id="PF00043">
    <property type="entry name" value="GST_C"/>
    <property type="match status" value="1"/>
</dbReference>
<dbReference type="Pfam" id="PF02798">
    <property type="entry name" value="GST_N"/>
    <property type="match status" value="1"/>
</dbReference>
<dbReference type="PIRSF" id="PIRSF037861">
    <property type="entry name" value="Prion_URE2"/>
    <property type="match status" value="1"/>
</dbReference>
<dbReference type="SFLD" id="SFLDS00019">
    <property type="entry name" value="Glutathione_Transferase_(cytos"/>
    <property type="match status" value="1"/>
</dbReference>
<dbReference type="SFLD" id="SFLDG00358">
    <property type="entry name" value="Main_(cytGST)"/>
    <property type="match status" value="1"/>
</dbReference>
<dbReference type="SUPFAM" id="SSF47616">
    <property type="entry name" value="GST C-terminal domain-like"/>
    <property type="match status" value="1"/>
</dbReference>
<dbReference type="SUPFAM" id="SSF52833">
    <property type="entry name" value="Thioredoxin-like"/>
    <property type="match status" value="1"/>
</dbReference>
<dbReference type="PROSITE" id="PS50405">
    <property type="entry name" value="GST_CTER"/>
    <property type="match status" value="1"/>
</dbReference>
<dbReference type="PROSITE" id="PS50404">
    <property type="entry name" value="GST_NTER"/>
    <property type="match status" value="1"/>
</dbReference>
<feature type="chain" id="PRO_0000186006" description="Protein URE2">
    <location>
        <begin position="1"/>
        <end position="328"/>
    </location>
</feature>
<feature type="domain" description="GST N-terminal">
    <location>
        <begin position="86"/>
        <end position="170"/>
    </location>
</feature>
<feature type="domain" description="GST C-terminal">
    <location>
        <begin position="179"/>
        <end position="328"/>
    </location>
</feature>
<feature type="region of interest" description="Disordered" evidence="2">
    <location>
        <begin position="1"/>
        <end position="35"/>
    </location>
</feature>
<feature type="compositionally biased region" description="Polar residues" evidence="2">
    <location>
        <begin position="1"/>
        <end position="14"/>
    </location>
</feature>
<feature type="compositionally biased region" description="Low complexity" evidence="2">
    <location>
        <begin position="15"/>
        <end position="30"/>
    </location>
</feature>
<evidence type="ECO:0000250" key="1"/>
<evidence type="ECO:0000256" key="2">
    <source>
        <dbReference type="SAM" id="MobiDB-lite"/>
    </source>
</evidence>
<evidence type="ECO:0000305" key="3"/>
<proteinExistence type="inferred from homology"/>
<reference key="1">
    <citation type="journal article" date="2002" name="Proc. Natl. Acad. Sci. U.S.A.">
        <title>Conservation of a portion of the S. cerevisiae Ure2p prion domain that interacts with the full-length protein.</title>
        <authorList>
            <person name="Edskes H.K."/>
            <person name="Wickner R.B."/>
        </authorList>
    </citation>
    <scope>NUCLEOTIDE SEQUENCE [GENOMIC DNA]</scope>
    <source>
        <strain>B4430</strain>
    </source>
</reference>
<accession>Q8NJR0</accession>
<name>URE2_CANMA</name>
<gene>
    <name type="primary">URE2</name>
</gene>